<dbReference type="EMBL" id="CP000880">
    <property type="protein sequence ID" value="ABX21890.1"/>
    <property type="molecule type" value="Genomic_DNA"/>
</dbReference>
<dbReference type="SMR" id="A9MI00"/>
<dbReference type="STRING" id="41514.SARI_02010"/>
<dbReference type="KEGG" id="ses:SARI_02010"/>
<dbReference type="HOGENOM" id="CLU_151267_1_0_6"/>
<dbReference type="Proteomes" id="UP000002084">
    <property type="component" value="Chromosome"/>
</dbReference>
<dbReference type="GO" id="GO:0005829">
    <property type="term" value="C:cytosol"/>
    <property type="evidence" value="ECO:0007669"/>
    <property type="project" value="TreeGrafter"/>
</dbReference>
<dbReference type="GO" id="GO:0043022">
    <property type="term" value="F:ribosome binding"/>
    <property type="evidence" value="ECO:0007669"/>
    <property type="project" value="UniProtKB-UniRule"/>
</dbReference>
<dbReference type="GO" id="GO:0019843">
    <property type="term" value="F:rRNA binding"/>
    <property type="evidence" value="ECO:0007669"/>
    <property type="project" value="UniProtKB-UniRule"/>
</dbReference>
<dbReference type="GO" id="GO:0003743">
    <property type="term" value="F:translation initiation factor activity"/>
    <property type="evidence" value="ECO:0007669"/>
    <property type="project" value="UniProtKB-UniRule"/>
</dbReference>
<dbReference type="CDD" id="cd04451">
    <property type="entry name" value="S1_IF1"/>
    <property type="match status" value="1"/>
</dbReference>
<dbReference type="FunFam" id="2.40.50.140:FF:000002">
    <property type="entry name" value="Translation initiation factor IF-1"/>
    <property type="match status" value="1"/>
</dbReference>
<dbReference type="Gene3D" id="2.40.50.140">
    <property type="entry name" value="Nucleic acid-binding proteins"/>
    <property type="match status" value="1"/>
</dbReference>
<dbReference type="HAMAP" id="MF_00075">
    <property type="entry name" value="IF_1"/>
    <property type="match status" value="1"/>
</dbReference>
<dbReference type="InterPro" id="IPR012340">
    <property type="entry name" value="NA-bd_OB-fold"/>
</dbReference>
<dbReference type="InterPro" id="IPR006196">
    <property type="entry name" value="RNA-binding_domain_S1_IF1"/>
</dbReference>
<dbReference type="InterPro" id="IPR003029">
    <property type="entry name" value="S1_domain"/>
</dbReference>
<dbReference type="InterPro" id="IPR004368">
    <property type="entry name" value="TIF_IF1"/>
</dbReference>
<dbReference type="NCBIfam" id="TIGR00008">
    <property type="entry name" value="infA"/>
    <property type="match status" value="1"/>
</dbReference>
<dbReference type="PANTHER" id="PTHR33370">
    <property type="entry name" value="TRANSLATION INITIATION FACTOR IF-1, CHLOROPLASTIC"/>
    <property type="match status" value="1"/>
</dbReference>
<dbReference type="PANTHER" id="PTHR33370:SF1">
    <property type="entry name" value="TRANSLATION INITIATION FACTOR IF-1, CHLOROPLASTIC"/>
    <property type="match status" value="1"/>
</dbReference>
<dbReference type="Pfam" id="PF01176">
    <property type="entry name" value="eIF-1a"/>
    <property type="match status" value="1"/>
</dbReference>
<dbReference type="SMART" id="SM00316">
    <property type="entry name" value="S1"/>
    <property type="match status" value="1"/>
</dbReference>
<dbReference type="SUPFAM" id="SSF50249">
    <property type="entry name" value="Nucleic acid-binding proteins"/>
    <property type="match status" value="1"/>
</dbReference>
<dbReference type="PROSITE" id="PS50832">
    <property type="entry name" value="S1_IF1_TYPE"/>
    <property type="match status" value="1"/>
</dbReference>
<evidence type="ECO:0000255" key="1">
    <source>
        <dbReference type="HAMAP-Rule" id="MF_00075"/>
    </source>
</evidence>
<name>IF1_SALAR</name>
<comment type="function">
    <text evidence="1">One of the essential components for the initiation of protein synthesis. Stabilizes the binding of IF-2 and IF-3 on the 30S subunit to which N-formylmethionyl-tRNA(fMet) subsequently binds. Helps modulate mRNA selection, yielding the 30S pre-initiation complex (PIC). Upon addition of the 50S ribosomal subunit IF-1, IF-2 and IF-3 are released leaving the mature 70S translation initiation complex.</text>
</comment>
<comment type="subunit">
    <text evidence="1">Component of the 30S ribosomal translation pre-initiation complex which assembles on the 30S ribosome in the order IF-2 and IF-3, IF-1 and N-formylmethionyl-tRNA(fMet); mRNA recruitment can occur at any time during PIC assembly.</text>
</comment>
<comment type="subcellular location">
    <subcellularLocation>
        <location evidence="1">Cytoplasm</location>
    </subcellularLocation>
</comment>
<comment type="similarity">
    <text evidence="1">Belongs to the IF-1 family.</text>
</comment>
<gene>
    <name evidence="1" type="primary">infA</name>
    <name type="ordered locus">SARI_02010</name>
</gene>
<accession>A9MI00</accession>
<reference key="1">
    <citation type="submission" date="2007-11" db="EMBL/GenBank/DDBJ databases">
        <authorList>
            <consortium name="The Salmonella enterica serovar Arizonae Genome Sequencing Project"/>
            <person name="McClelland M."/>
            <person name="Sanderson E.K."/>
            <person name="Porwollik S."/>
            <person name="Spieth J."/>
            <person name="Clifton W.S."/>
            <person name="Fulton R."/>
            <person name="Chunyan W."/>
            <person name="Wollam A."/>
            <person name="Shah N."/>
            <person name="Pepin K."/>
            <person name="Bhonagiri V."/>
            <person name="Nash W."/>
            <person name="Johnson M."/>
            <person name="Thiruvilangam P."/>
            <person name="Wilson R."/>
        </authorList>
    </citation>
    <scope>NUCLEOTIDE SEQUENCE [LARGE SCALE GENOMIC DNA]</scope>
    <source>
        <strain>ATCC BAA-731 / CDC346-86 / RSK2980</strain>
    </source>
</reference>
<keyword id="KW-0963">Cytoplasm</keyword>
<keyword id="KW-0396">Initiation factor</keyword>
<keyword id="KW-0648">Protein biosynthesis</keyword>
<keyword id="KW-1185">Reference proteome</keyword>
<keyword id="KW-0694">RNA-binding</keyword>
<keyword id="KW-0699">rRNA-binding</keyword>
<feature type="chain" id="PRO_0000338912" description="Translation initiation factor IF-1">
    <location>
        <begin position="1"/>
        <end position="72"/>
    </location>
</feature>
<feature type="domain" description="S1-like" evidence="1">
    <location>
        <begin position="1"/>
        <end position="72"/>
    </location>
</feature>
<sequence length="72" mass="8250">MAKEDNIEMQGTVLETLPNTMFRVELENGHVVTAHISGKMRKNYIRILTGDKVTVELTPYDLSKGRIVFRSR</sequence>
<proteinExistence type="inferred from homology"/>
<organism>
    <name type="scientific">Salmonella arizonae (strain ATCC BAA-731 / CDC346-86 / RSK2980)</name>
    <dbReference type="NCBI Taxonomy" id="41514"/>
    <lineage>
        <taxon>Bacteria</taxon>
        <taxon>Pseudomonadati</taxon>
        <taxon>Pseudomonadota</taxon>
        <taxon>Gammaproteobacteria</taxon>
        <taxon>Enterobacterales</taxon>
        <taxon>Enterobacteriaceae</taxon>
        <taxon>Salmonella</taxon>
    </lineage>
</organism>
<protein>
    <recommendedName>
        <fullName evidence="1">Translation initiation factor IF-1</fullName>
    </recommendedName>
</protein>